<gene>
    <name type="primary">ctaF</name>
    <name type="ordered locus">MAP_1939c</name>
</gene>
<keyword id="KW-1003">Cell membrane</keyword>
<keyword id="KW-0472">Membrane</keyword>
<keyword id="KW-1185">Reference proteome</keyword>
<keyword id="KW-1278">Translocase</keyword>
<keyword id="KW-0812">Transmembrane</keyword>
<keyword id="KW-1133">Transmembrane helix</keyword>
<organism>
    <name type="scientific">Mycolicibacterium paratuberculosis (strain ATCC BAA-968 / K-10)</name>
    <name type="common">Mycobacterium paratuberculosis</name>
    <dbReference type="NCBI Taxonomy" id="262316"/>
    <lineage>
        <taxon>Bacteria</taxon>
        <taxon>Bacillati</taxon>
        <taxon>Actinomycetota</taxon>
        <taxon>Actinomycetes</taxon>
        <taxon>Mycobacteriales</taxon>
        <taxon>Mycobacteriaceae</taxon>
        <taxon>Mycobacterium</taxon>
        <taxon>Mycobacterium avium complex (MAC)</taxon>
    </lineage>
</organism>
<comment type="function">
    <text evidence="1">Part of cytochrome c oxidase, its function is unknown.</text>
</comment>
<comment type="catalytic activity">
    <reaction>
        <text>4 Fe(II)-[cytochrome c] + O2 + 8 H(+)(in) = 4 Fe(III)-[cytochrome c] + 2 H2O + 4 H(+)(out)</text>
        <dbReference type="Rhea" id="RHEA:11436"/>
        <dbReference type="Rhea" id="RHEA-COMP:10350"/>
        <dbReference type="Rhea" id="RHEA-COMP:14399"/>
        <dbReference type="ChEBI" id="CHEBI:15377"/>
        <dbReference type="ChEBI" id="CHEBI:15378"/>
        <dbReference type="ChEBI" id="CHEBI:15379"/>
        <dbReference type="ChEBI" id="CHEBI:29033"/>
        <dbReference type="ChEBI" id="CHEBI:29034"/>
        <dbReference type="EC" id="7.1.1.9"/>
    </reaction>
</comment>
<comment type="subunit">
    <text evidence="1">Associates with subunits I, II and III to form cytochrome c oxidase.</text>
</comment>
<comment type="subcellular location">
    <subcellularLocation>
        <location evidence="1">Cell membrane</location>
        <topology evidence="1">Multi-pass membrane protein</topology>
    </subcellularLocation>
</comment>
<comment type="similarity">
    <text evidence="3">Belongs to the cytochrome c oxidase bacterial subunit CtaF family.</text>
</comment>
<protein>
    <recommendedName>
        <fullName>Probable cytochrome c oxidase polypeptide 4</fullName>
        <ecNumber>7.1.1.9</ecNumber>
    </recommendedName>
    <alternativeName>
        <fullName>Cytochrome aa3 subunit 4</fullName>
    </alternativeName>
    <alternativeName>
        <fullName>Cytochrome c oxidase polypeptide IV</fullName>
    </alternativeName>
</protein>
<reference key="1">
    <citation type="journal article" date="2005" name="Proc. Natl. Acad. Sci. U.S.A.">
        <title>The complete genome sequence of Mycobacterium avium subspecies paratuberculosis.</title>
        <authorList>
            <person name="Li L."/>
            <person name="Bannantine J.P."/>
            <person name="Zhang Q."/>
            <person name="Amonsin A."/>
            <person name="May B.J."/>
            <person name="Alt D."/>
            <person name="Banerji N."/>
            <person name="Kanjilal S."/>
            <person name="Kapur V."/>
        </authorList>
    </citation>
    <scope>NUCLEOTIDE SEQUENCE [LARGE SCALE GENOMIC DNA]</scope>
    <source>
        <strain>ATCC BAA-968 / K-10</strain>
    </source>
</reference>
<dbReference type="EC" id="7.1.1.9"/>
<dbReference type="EMBL" id="AE016958">
    <property type="protein sequence ID" value="AAS04256.1"/>
    <property type="molecule type" value="Genomic_DNA"/>
</dbReference>
<dbReference type="RefSeq" id="WP_003872269.1">
    <property type="nucleotide sequence ID" value="NZ_CP106873.1"/>
</dbReference>
<dbReference type="SMR" id="Q73YL6"/>
<dbReference type="STRING" id="262316.MAP_1939c"/>
<dbReference type="KEGG" id="mpa:MAP_1939c"/>
<dbReference type="eggNOG" id="ENOG5032TTI">
    <property type="taxonomic scope" value="Bacteria"/>
</dbReference>
<dbReference type="HOGENOM" id="CLU_145919_0_0_11"/>
<dbReference type="Proteomes" id="UP000000580">
    <property type="component" value="Chromosome"/>
</dbReference>
<dbReference type="GO" id="GO:0005886">
    <property type="term" value="C:plasma membrane"/>
    <property type="evidence" value="ECO:0007669"/>
    <property type="project" value="UniProtKB-SubCell"/>
</dbReference>
<dbReference type="GO" id="GO:0004129">
    <property type="term" value="F:cytochrome-c oxidase activity"/>
    <property type="evidence" value="ECO:0007669"/>
    <property type="project" value="UniProtKB-EC"/>
</dbReference>
<dbReference type="GO" id="GO:0022900">
    <property type="term" value="P:electron transport chain"/>
    <property type="evidence" value="ECO:0007669"/>
    <property type="project" value="InterPro"/>
</dbReference>
<dbReference type="InterPro" id="IPR021050">
    <property type="entry name" value="Cyt_c_oxidase_su4_actinobac"/>
</dbReference>
<dbReference type="Pfam" id="PF12270">
    <property type="entry name" value="Cyt_c_ox_IV"/>
    <property type="match status" value="1"/>
</dbReference>
<dbReference type="PIRSF" id="PIRSF017385">
    <property type="entry name" value="CtaF"/>
    <property type="match status" value="1"/>
</dbReference>
<feature type="chain" id="PRO_0000220018" description="Probable cytochrome c oxidase polypeptide 4">
    <location>
        <begin position="1"/>
        <end position="139"/>
    </location>
</feature>
<feature type="transmembrane region" description="Helical" evidence="2">
    <location>
        <begin position="10"/>
        <end position="30"/>
    </location>
</feature>
<feature type="transmembrane region" description="Helical" evidence="2">
    <location>
        <begin position="36"/>
        <end position="56"/>
    </location>
</feature>
<feature type="transmembrane region" description="Helical" evidence="2">
    <location>
        <begin position="78"/>
        <end position="98"/>
    </location>
</feature>
<feature type="transmembrane region" description="Helical" evidence="2">
    <location>
        <begin position="101"/>
        <end position="121"/>
    </location>
</feature>
<name>COX4_MYCPA</name>
<sequence length="139" mass="15076">MHIEARLFEFIAGFFFLTALLYGVLTALFATGGEEWAGTTALALTGGLALIVATFFRFVARRIDTRPEDYEGAEISDGAGELGFFSPHSWWPILIALSGSVAAVGIALWLPWLIVAGVMFILSSVAGLVFEYYLGPEKH</sequence>
<accession>Q73YL6</accession>
<proteinExistence type="inferred from homology"/>
<evidence type="ECO:0000250" key="1"/>
<evidence type="ECO:0000255" key="2"/>
<evidence type="ECO:0000305" key="3"/>